<organism>
    <name type="scientific">Lacticaseibacillus paracasei (strain ATCC 334 / BCRC 17002 / CCUG 31169 / CIP 107868 / KCTC 3260 / NRRL B-441)</name>
    <name type="common">Lactobacillus paracasei</name>
    <dbReference type="NCBI Taxonomy" id="321967"/>
    <lineage>
        <taxon>Bacteria</taxon>
        <taxon>Bacillati</taxon>
        <taxon>Bacillota</taxon>
        <taxon>Bacilli</taxon>
        <taxon>Lactobacillales</taxon>
        <taxon>Lactobacillaceae</taxon>
        <taxon>Lacticaseibacillus</taxon>
    </lineage>
</organism>
<comment type="function">
    <text evidence="1">A non-essential component of RNA polymerase (RNAP).</text>
</comment>
<comment type="catalytic activity">
    <reaction evidence="1">
        <text>RNA(n) + a ribonucleoside 5'-triphosphate = RNA(n+1) + diphosphate</text>
        <dbReference type="Rhea" id="RHEA:21248"/>
        <dbReference type="Rhea" id="RHEA-COMP:14527"/>
        <dbReference type="Rhea" id="RHEA-COMP:17342"/>
        <dbReference type="ChEBI" id="CHEBI:33019"/>
        <dbReference type="ChEBI" id="CHEBI:61557"/>
        <dbReference type="ChEBI" id="CHEBI:140395"/>
        <dbReference type="EC" id="2.7.7.6"/>
    </reaction>
</comment>
<comment type="subunit">
    <text evidence="1">RNAP is composed of a core of 2 alpha, a beta and a beta' subunit. The core is associated with a delta subunit, and at least one of epsilon or omega. When a sigma factor is associated with the core the holoenzyme is formed, which can initiate transcription.</text>
</comment>
<comment type="similarity">
    <text evidence="1">Belongs to the RNA polymerase subunit epsilon family.</text>
</comment>
<proteinExistence type="inferred from homology"/>
<feature type="chain" id="PRO_1000068867" description="DNA-directed RNA polymerase subunit epsilon">
    <location>
        <begin position="1"/>
        <end position="70"/>
    </location>
</feature>
<protein>
    <recommendedName>
        <fullName evidence="1">DNA-directed RNA polymerase subunit epsilon</fullName>
        <shortName evidence="1">RNAP epsilon subunit</shortName>
        <ecNumber evidence="1">2.7.7.6</ecNumber>
    </recommendedName>
    <alternativeName>
        <fullName evidence="1">RNA polymerase epsilon subunit</fullName>
    </alternativeName>
    <alternativeName>
        <fullName evidence="1">Transcriptase subunit epsilon</fullName>
    </alternativeName>
</protein>
<gene>
    <name evidence="1" type="primary">rpoY</name>
    <name type="ordered locus">LSEI_1299</name>
</gene>
<sequence>MIYKVLYQKDKIQNPRRETTQTLYLEAPSAVEARALVEKNTPYNIEFIQELSGNFLEYEEKSANFKLTTF</sequence>
<evidence type="ECO:0000255" key="1">
    <source>
        <dbReference type="HAMAP-Rule" id="MF_01553"/>
    </source>
</evidence>
<accession>Q039P0</accession>
<name>RPOY_LACP3</name>
<dbReference type="EC" id="2.7.7.6" evidence="1"/>
<dbReference type="EMBL" id="CP000423">
    <property type="protein sequence ID" value="ABJ70082.1"/>
    <property type="molecule type" value="Genomic_DNA"/>
</dbReference>
<dbReference type="RefSeq" id="WP_003565214.1">
    <property type="nucleotide sequence ID" value="NC_008526.1"/>
</dbReference>
<dbReference type="RefSeq" id="YP_806524.1">
    <property type="nucleotide sequence ID" value="NC_008526.1"/>
</dbReference>
<dbReference type="SMR" id="Q039P0"/>
<dbReference type="STRING" id="321967.LSEI_1299"/>
<dbReference type="PaxDb" id="321967-LSEI_1299"/>
<dbReference type="KEGG" id="lca:LSEI_1299"/>
<dbReference type="PATRIC" id="fig|321967.11.peg.1277"/>
<dbReference type="HOGENOM" id="CLU_187518_0_0_9"/>
<dbReference type="Proteomes" id="UP000001651">
    <property type="component" value="Chromosome"/>
</dbReference>
<dbReference type="GO" id="GO:0000428">
    <property type="term" value="C:DNA-directed RNA polymerase complex"/>
    <property type="evidence" value="ECO:0007669"/>
    <property type="project" value="UniProtKB-KW"/>
</dbReference>
<dbReference type="GO" id="GO:0003677">
    <property type="term" value="F:DNA binding"/>
    <property type="evidence" value="ECO:0007669"/>
    <property type="project" value="UniProtKB-UniRule"/>
</dbReference>
<dbReference type="GO" id="GO:0003899">
    <property type="term" value="F:DNA-directed RNA polymerase activity"/>
    <property type="evidence" value="ECO:0007669"/>
    <property type="project" value="UniProtKB-UniRule"/>
</dbReference>
<dbReference type="GO" id="GO:0006351">
    <property type="term" value="P:DNA-templated transcription"/>
    <property type="evidence" value="ECO:0007669"/>
    <property type="project" value="UniProtKB-UniRule"/>
</dbReference>
<dbReference type="Gene3D" id="3.10.20.730">
    <property type="entry name" value="RNAP, epsilon subunit-like"/>
    <property type="match status" value="1"/>
</dbReference>
<dbReference type="HAMAP" id="MF_01553">
    <property type="entry name" value="RNApol_bact_RpoY"/>
    <property type="match status" value="1"/>
</dbReference>
<dbReference type="InterPro" id="IPR009907">
    <property type="entry name" value="RpoY"/>
</dbReference>
<dbReference type="NCBIfam" id="NF010188">
    <property type="entry name" value="PRK13667.1"/>
    <property type="match status" value="1"/>
</dbReference>
<dbReference type="Pfam" id="PF07288">
    <property type="entry name" value="RpoY"/>
    <property type="match status" value="1"/>
</dbReference>
<reference key="1">
    <citation type="journal article" date="2006" name="Proc. Natl. Acad. Sci. U.S.A.">
        <title>Comparative genomics of the lactic acid bacteria.</title>
        <authorList>
            <person name="Makarova K.S."/>
            <person name="Slesarev A."/>
            <person name="Wolf Y.I."/>
            <person name="Sorokin A."/>
            <person name="Mirkin B."/>
            <person name="Koonin E.V."/>
            <person name="Pavlov A."/>
            <person name="Pavlova N."/>
            <person name="Karamychev V."/>
            <person name="Polouchine N."/>
            <person name="Shakhova V."/>
            <person name="Grigoriev I."/>
            <person name="Lou Y."/>
            <person name="Rohksar D."/>
            <person name="Lucas S."/>
            <person name="Huang K."/>
            <person name="Goodstein D.M."/>
            <person name="Hawkins T."/>
            <person name="Plengvidhya V."/>
            <person name="Welker D."/>
            <person name="Hughes J."/>
            <person name="Goh Y."/>
            <person name="Benson A."/>
            <person name="Baldwin K."/>
            <person name="Lee J.-H."/>
            <person name="Diaz-Muniz I."/>
            <person name="Dosti B."/>
            <person name="Smeianov V."/>
            <person name="Wechter W."/>
            <person name="Barabote R."/>
            <person name="Lorca G."/>
            <person name="Altermann E."/>
            <person name="Barrangou R."/>
            <person name="Ganesan B."/>
            <person name="Xie Y."/>
            <person name="Rawsthorne H."/>
            <person name="Tamir D."/>
            <person name="Parker C."/>
            <person name="Breidt F."/>
            <person name="Broadbent J.R."/>
            <person name="Hutkins R."/>
            <person name="O'Sullivan D."/>
            <person name="Steele J."/>
            <person name="Unlu G."/>
            <person name="Saier M.H. Jr."/>
            <person name="Klaenhammer T."/>
            <person name="Richardson P."/>
            <person name="Kozyavkin S."/>
            <person name="Weimer B.C."/>
            <person name="Mills D.A."/>
        </authorList>
    </citation>
    <scope>NUCLEOTIDE SEQUENCE [LARGE SCALE GENOMIC DNA]</scope>
    <source>
        <strain>ATCC 334 / BCRC 17002 / CCUG 31169 / CIP 107868 / KCTC 3260 / NRRL B-441</strain>
    </source>
</reference>
<keyword id="KW-0240">DNA-directed RNA polymerase</keyword>
<keyword id="KW-0548">Nucleotidyltransferase</keyword>
<keyword id="KW-1185">Reference proteome</keyword>
<keyword id="KW-0804">Transcription</keyword>
<keyword id="KW-0808">Transferase</keyword>